<evidence type="ECO:0000255" key="1">
    <source>
        <dbReference type="HAMAP-Rule" id="MF_00281"/>
    </source>
</evidence>
<feature type="chain" id="PRO_0000126667" description="Phenylalanine--tRNA ligase alpha subunit">
    <location>
        <begin position="1"/>
        <end position="339"/>
    </location>
</feature>
<feature type="binding site" evidence="1">
    <location>
        <position position="250"/>
    </location>
    <ligand>
        <name>Mg(2+)</name>
        <dbReference type="ChEBI" id="CHEBI:18420"/>
        <note>shared with beta subunit</note>
    </ligand>
</feature>
<sequence>MIAKIEQLLKEVEALHASNAEELEALRIKYLSKKGAINDLMADFRNVAAEQKKEVGMRLNELKTKAQDKINALKEQFESQDNSCDGLDLTRSAYPIELGTRHPITIVKNEVIDIFARLGFSIAEGPEIEDDWHVFSALNFAEDHPARDMQDTFFIEAHPDVVLRTHTSSVQTRVMETSKPPIRIICPGRVYRNEAISYRAHCFFHQVEALYVDKNVSFTDLKQVLLLFAKEMFGTDTKIRLRPSYFPFTEPSAEMDISCNICGGKGCPFCKHTGWVEILGCGMVDPNVLESNGIDSKVYSGYALGMGIERITNLKYQVKDLRMFSENDTRFLKEFEAAY</sequence>
<reference key="1">
    <citation type="journal article" date="2003" name="Science">
        <title>A genomic view of the human-Bacteroides thetaiotaomicron symbiosis.</title>
        <authorList>
            <person name="Xu J."/>
            <person name="Bjursell M.K."/>
            <person name="Himrod J."/>
            <person name="Deng S."/>
            <person name="Carmichael L.K."/>
            <person name="Chiang H.C."/>
            <person name="Hooper L.V."/>
            <person name="Gordon J.I."/>
        </authorList>
    </citation>
    <scope>NUCLEOTIDE SEQUENCE [LARGE SCALE GENOMIC DNA]</scope>
    <source>
        <strain>ATCC 29148 / DSM 2079 / JCM 5827 / CCUG 10774 / NCTC 10582 / VPI-5482 / E50</strain>
    </source>
</reference>
<accession>Q8A756</accession>
<comment type="catalytic activity">
    <reaction evidence="1">
        <text>tRNA(Phe) + L-phenylalanine + ATP = L-phenylalanyl-tRNA(Phe) + AMP + diphosphate + H(+)</text>
        <dbReference type="Rhea" id="RHEA:19413"/>
        <dbReference type="Rhea" id="RHEA-COMP:9668"/>
        <dbReference type="Rhea" id="RHEA-COMP:9699"/>
        <dbReference type="ChEBI" id="CHEBI:15378"/>
        <dbReference type="ChEBI" id="CHEBI:30616"/>
        <dbReference type="ChEBI" id="CHEBI:33019"/>
        <dbReference type="ChEBI" id="CHEBI:58095"/>
        <dbReference type="ChEBI" id="CHEBI:78442"/>
        <dbReference type="ChEBI" id="CHEBI:78531"/>
        <dbReference type="ChEBI" id="CHEBI:456215"/>
        <dbReference type="EC" id="6.1.1.20"/>
    </reaction>
</comment>
<comment type="cofactor">
    <cofactor evidence="1">
        <name>Mg(2+)</name>
        <dbReference type="ChEBI" id="CHEBI:18420"/>
    </cofactor>
    <text evidence="1">Binds 2 magnesium ions per tetramer.</text>
</comment>
<comment type="subunit">
    <text evidence="1">Tetramer of two alpha and two beta subunits.</text>
</comment>
<comment type="subcellular location">
    <subcellularLocation>
        <location evidence="1">Cytoplasm</location>
    </subcellularLocation>
</comment>
<comment type="similarity">
    <text evidence="1">Belongs to the class-II aminoacyl-tRNA synthetase family. Phe-tRNA synthetase alpha subunit type 1 subfamily.</text>
</comment>
<organism>
    <name type="scientific">Bacteroides thetaiotaomicron (strain ATCC 29148 / DSM 2079 / JCM 5827 / CCUG 10774 / NCTC 10582 / VPI-5482 / E50)</name>
    <dbReference type="NCBI Taxonomy" id="226186"/>
    <lineage>
        <taxon>Bacteria</taxon>
        <taxon>Pseudomonadati</taxon>
        <taxon>Bacteroidota</taxon>
        <taxon>Bacteroidia</taxon>
        <taxon>Bacteroidales</taxon>
        <taxon>Bacteroidaceae</taxon>
        <taxon>Bacteroides</taxon>
    </lineage>
</organism>
<dbReference type="EC" id="6.1.1.20" evidence="1"/>
<dbReference type="EMBL" id="AE015928">
    <property type="protein sequence ID" value="AAO76776.1"/>
    <property type="molecule type" value="Genomic_DNA"/>
</dbReference>
<dbReference type="RefSeq" id="NP_810582.1">
    <property type="nucleotide sequence ID" value="NC_004663.1"/>
</dbReference>
<dbReference type="RefSeq" id="WP_008763378.1">
    <property type="nucleotide sequence ID" value="NZ_UYXG01000032.1"/>
</dbReference>
<dbReference type="SMR" id="Q8A756"/>
<dbReference type="FunCoup" id="Q8A756">
    <property type="interactions" value="510"/>
</dbReference>
<dbReference type="STRING" id="226186.BT_1669"/>
<dbReference type="PaxDb" id="226186-BT_1669"/>
<dbReference type="EnsemblBacteria" id="AAO76776">
    <property type="protein sequence ID" value="AAO76776"/>
    <property type="gene ID" value="BT_1669"/>
</dbReference>
<dbReference type="GeneID" id="60927656"/>
<dbReference type="KEGG" id="bth:BT_1669"/>
<dbReference type="PATRIC" id="fig|226186.12.peg.1711"/>
<dbReference type="eggNOG" id="COG0016">
    <property type="taxonomic scope" value="Bacteria"/>
</dbReference>
<dbReference type="HOGENOM" id="CLU_025086_0_1_10"/>
<dbReference type="InParanoid" id="Q8A756"/>
<dbReference type="OrthoDB" id="9800719at2"/>
<dbReference type="Proteomes" id="UP000001414">
    <property type="component" value="Chromosome"/>
</dbReference>
<dbReference type="GO" id="GO:0005737">
    <property type="term" value="C:cytoplasm"/>
    <property type="evidence" value="ECO:0000318"/>
    <property type="project" value="GO_Central"/>
</dbReference>
<dbReference type="GO" id="GO:0005524">
    <property type="term" value="F:ATP binding"/>
    <property type="evidence" value="ECO:0007669"/>
    <property type="project" value="UniProtKB-UniRule"/>
</dbReference>
<dbReference type="GO" id="GO:0000287">
    <property type="term" value="F:magnesium ion binding"/>
    <property type="evidence" value="ECO:0007669"/>
    <property type="project" value="UniProtKB-UniRule"/>
</dbReference>
<dbReference type="GO" id="GO:0004826">
    <property type="term" value="F:phenylalanine-tRNA ligase activity"/>
    <property type="evidence" value="ECO:0000318"/>
    <property type="project" value="GO_Central"/>
</dbReference>
<dbReference type="GO" id="GO:0000049">
    <property type="term" value="F:tRNA binding"/>
    <property type="evidence" value="ECO:0007669"/>
    <property type="project" value="InterPro"/>
</dbReference>
<dbReference type="GO" id="GO:0006432">
    <property type="term" value="P:phenylalanyl-tRNA aminoacylation"/>
    <property type="evidence" value="ECO:0000318"/>
    <property type="project" value="GO_Central"/>
</dbReference>
<dbReference type="CDD" id="cd00496">
    <property type="entry name" value="PheRS_alpha_core"/>
    <property type="match status" value="1"/>
</dbReference>
<dbReference type="FunFam" id="3.30.930.10:FF:000003">
    <property type="entry name" value="Phenylalanine--tRNA ligase alpha subunit"/>
    <property type="match status" value="1"/>
</dbReference>
<dbReference type="Gene3D" id="3.30.930.10">
    <property type="entry name" value="Bira Bifunctional Protein, Domain 2"/>
    <property type="match status" value="1"/>
</dbReference>
<dbReference type="HAMAP" id="MF_00281">
    <property type="entry name" value="Phe_tRNA_synth_alpha1"/>
    <property type="match status" value="1"/>
</dbReference>
<dbReference type="InterPro" id="IPR006195">
    <property type="entry name" value="aa-tRNA-synth_II"/>
</dbReference>
<dbReference type="InterPro" id="IPR045864">
    <property type="entry name" value="aa-tRNA-synth_II/BPL/LPL"/>
</dbReference>
<dbReference type="InterPro" id="IPR004529">
    <property type="entry name" value="Phe-tRNA-synth_IIc_asu"/>
</dbReference>
<dbReference type="InterPro" id="IPR004188">
    <property type="entry name" value="Phe-tRNA_ligase_II_N"/>
</dbReference>
<dbReference type="InterPro" id="IPR022911">
    <property type="entry name" value="Phe_tRNA_ligase_alpha1_bac"/>
</dbReference>
<dbReference type="InterPro" id="IPR002319">
    <property type="entry name" value="Phenylalanyl-tRNA_Synthase"/>
</dbReference>
<dbReference type="InterPro" id="IPR010978">
    <property type="entry name" value="tRNA-bd_arm"/>
</dbReference>
<dbReference type="NCBIfam" id="TIGR00468">
    <property type="entry name" value="pheS"/>
    <property type="match status" value="1"/>
</dbReference>
<dbReference type="PANTHER" id="PTHR11538:SF41">
    <property type="entry name" value="PHENYLALANINE--TRNA LIGASE, MITOCHONDRIAL"/>
    <property type="match status" value="1"/>
</dbReference>
<dbReference type="PANTHER" id="PTHR11538">
    <property type="entry name" value="PHENYLALANYL-TRNA SYNTHETASE"/>
    <property type="match status" value="1"/>
</dbReference>
<dbReference type="Pfam" id="PF02912">
    <property type="entry name" value="Phe_tRNA-synt_N"/>
    <property type="match status" value="1"/>
</dbReference>
<dbReference type="Pfam" id="PF01409">
    <property type="entry name" value="tRNA-synt_2d"/>
    <property type="match status" value="1"/>
</dbReference>
<dbReference type="SUPFAM" id="SSF55681">
    <property type="entry name" value="Class II aaRS and biotin synthetases"/>
    <property type="match status" value="1"/>
</dbReference>
<dbReference type="SUPFAM" id="SSF46589">
    <property type="entry name" value="tRNA-binding arm"/>
    <property type="match status" value="1"/>
</dbReference>
<dbReference type="PROSITE" id="PS50862">
    <property type="entry name" value="AA_TRNA_LIGASE_II"/>
    <property type="match status" value="1"/>
</dbReference>
<gene>
    <name evidence="1" type="primary">pheS</name>
    <name type="ordered locus">BT_1669</name>
</gene>
<name>SYFA_BACTN</name>
<proteinExistence type="inferred from homology"/>
<protein>
    <recommendedName>
        <fullName evidence="1">Phenylalanine--tRNA ligase alpha subunit</fullName>
        <ecNumber evidence="1">6.1.1.20</ecNumber>
    </recommendedName>
    <alternativeName>
        <fullName evidence="1">Phenylalanyl-tRNA synthetase alpha subunit</fullName>
        <shortName evidence="1">PheRS</shortName>
    </alternativeName>
</protein>
<keyword id="KW-0030">Aminoacyl-tRNA synthetase</keyword>
<keyword id="KW-0067">ATP-binding</keyword>
<keyword id="KW-0963">Cytoplasm</keyword>
<keyword id="KW-0436">Ligase</keyword>
<keyword id="KW-0460">Magnesium</keyword>
<keyword id="KW-0479">Metal-binding</keyword>
<keyword id="KW-0547">Nucleotide-binding</keyword>
<keyword id="KW-0648">Protein biosynthesis</keyword>
<keyword id="KW-1185">Reference proteome</keyword>